<feature type="chain" id="PRO_0000155822" description="Quinolinate synthase">
    <location>
        <begin position="1"/>
        <end position="366"/>
    </location>
</feature>
<feature type="binding site" evidence="1">
    <location>
        <position position="44"/>
    </location>
    <ligand>
        <name>iminosuccinate</name>
        <dbReference type="ChEBI" id="CHEBI:77875"/>
    </ligand>
</feature>
<feature type="binding site" evidence="1">
    <location>
        <position position="61"/>
    </location>
    <ligand>
        <name>iminosuccinate</name>
        <dbReference type="ChEBI" id="CHEBI:77875"/>
    </ligand>
</feature>
<feature type="binding site" evidence="1">
    <location>
        <position position="108"/>
    </location>
    <ligand>
        <name>[4Fe-4S] cluster</name>
        <dbReference type="ChEBI" id="CHEBI:49883"/>
    </ligand>
</feature>
<feature type="binding site" evidence="1">
    <location>
        <begin position="139"/>
        <end position="141"/>
    </location>
    <ligand>
        <name>iminosuccinate</name>
        <dbReference type="ChEBI" id="CHEBI:77875"/>
    </ligand>
</feature>
<feature type="binding site" evidence="1">
    <location>
        <position position="160"/>
    </location>
    <ligand>
        <name>iminosuccinate</name>
        <dbReference type="ChEBI" id="CHEBI:77875"/>
    </ligand>
</feature>
<feature type="binding site" evidence="1">
    <location>
        <position position="228"/>
    </location>
    <ligand>
        <name>[4Fe-4S] cluster</name>
        <dbReference type="ChEBI" id="CHEBI:49883"/>
    </ligand>
</feature>
<feature type="binding site" evidence="1">
    <location>
        <begin position="254"/>
        <end position="256"/>
    </location>
    <ligand>
        <name>iminosuccinate</name>
        <dbReference type="ChEBI" id="CHEBI:77875"/>
    </ligand>
</feature>
<feature type="binding site" evidence="1">
    <location>
        <position position="271"/>
    </location>
    <ligand>
        <name>iminosuccinate</name>
        <dbReference type="ChEBI" id="CHEBI:77875"/>
    </ligand>
</feature>
<feature type="binding site" evidence="1">
    <location>
        <position position="318"/>
    </location>
    <ligand>
        <name>[4Fe-4S] cluster</name>
        <dbReference type="ChEBI" id="CHEBI:49883"/>
    </ligand>
</feature>
<sequence>MNLLETVEQDTMPTHYKQMTQVEMIARVTEIKAQLGENLFIPCHHYQKDEVVPFADAIGDSLQLAQIAAQNKKAKHIVFCGVHFMAETADMLTTSEQIVTLPDMRAGCSMADMADIHQLTNAWPKLQTLFGDTILPVTYINSTAAIKSFVGEHGGTTVTSSNATKIVSWALEQKERIFFLPDQHLGRNTAFELGIPLEHMAIWNPIKNELEYEGNLDDCKVILWKGYCSVHQHFTVKNIENIRKNHPNMRIIVHPECTHEVVSLADDSGSTKKIVTEINNAAPGTEWAVGTEANLVGRIIQENPDKKIVSLNPFMCPCMTMNRIDLPHLLWTLEAIQNGEKRNQIKVDEQTTKFALKALERMLQLS</sequence>
<name>NADA_LISMO</name>
<protein>
    <recommendedName>
        <fullName evidence="1">Quinolinate synthase</fullName>
        <ecNumber evidence="1">2.5.1.72</ecNumber>
    </recommendedName>
</protein>
<dbReference type="EC" id="2.5.1.72" evidence="1"/>
<dbReference type="EMBL" id="AL591982">
    <property type="protein sequence ID" value="CAD00103.1"/>
    <property type="molecule type" value="Genomic_DNA"/>
</dbReference>
<dbReference type="PIR" id="AI1327">
    <property type="entry name" value="AI1327"/>
</dbReference>
<dbReference type="RefSeq" id="NP_465549.1">
    <property type="nucleotide sequence ID" value="NC_003210.1"/>
</dbReference>
<dbReference type="RefSeq" id="WP_010989875.1">
    <property type="nucleotide sequence ID" value="NZ_CP149495.1"/>
</dbReference>
<dbReference type="SMR" id="Q8Y5N2"/>
<dbReference type="STRING" id="169963.gene:17594710"/>
<dbReference type="PaxDb" id="169963-lmo2025"/>
<dbReference type="EnsemblBacteria" id="CAD00103">
    <property type="protein sequence ID" value="CAD00103"/>
    <property type="gene ID" value="CAD00103"/>
</dbReference>
<dbReference type="GeneID" id="987946"/>
<dbReference type="KEGG" id="lmo:lmo2025"/>
<dbReference type="PATRIC" id="fig|169963.11.peg.2073"/>
<dbReference type="eggNOG" id="COG0379">
    <property type="taxonomic scope" value="Bacteria"/>
</dbReference>
<dbReference type="HOGENOM" id="CLU_047382_2_0_9"/>
<dbReference type="OrthoDB" id="9801204at2"/>
<dbReference type="PhylomeDB" id="Q8Y5N2"/>
<dbReference type="BioCyc" id="LMON169963:LMO2025-MONOMER"/>
<dbReference type="UniPathway" id="UPA00253">
    <property type="reaction ID" value="UER00327"/>
</dbReference>
<dbReference type="Proteomes" id="UP000000817">
    <property type="component" value="Chromosome"/>
</dbReference>
<dbReference type="GO" id="GO:0005829">
    <property type="term" value="C:cytosol"/>
    <property type="evidence" value="ECO:0000318"/>
    <property type="project" value="GO_Central"/>
</dbReference>
<dbReference type="GO" id="GO:0051539">
    <property type="term" value="F:4 iron, 4 sulfur cluster binding"/>
    <property type="evidence" value="ECO:0000318"/>
    <property type="project" value="GO_Central"/>
</dbReference>
<dbReference type="GO" id="GO:0046872">
    <property type="term" value="F:metal ion binding"/>
    <property type="evidence" value="ECO:0007669"/>
    <property type="project" value="UniProtKB-KW"/>
</dbReference>
<dbReference type="GO" id="GO:0008987">
    <property type="term" value="F:quinolinate synthetase A activity"/>
    <property type="evidence" value="ECO:0000318"/>
    <property type="project" value="GO_Central"/>
</dbReference>
<dbReference type="GO" id="GO:0034628">
    <property type="term" value="P:'de novo' NAD biosynthetic process from L-aspartate"/>
    <property type="evidence" value="ECO:0000318"/>
    <property type="project" value="GO_Central"/>
</dbReference>
<dbReference type="FunFam" id="3.40.50.10800:FF:000001">
    <property type="entry name" value="Quinolinate synthase A"/>
    <property type="match status" value="1"/>
</dbReference>
<dbReference type="Gene3D" id="3.40.50.10800">
    <property type="entry name" value="NadA-like"/>
    <property type="match status" value="3"/>
</dbReference>
<dbReference type="HAMAP" id="MF_00569">
    <property type="entry name" value="NadA_type3"/>
    <property type="match status" value="1"/>
</dbReference>
<dbReference type="InterPro" id="IPR003473">
    <property type="entry name" value="NadA"/>
</dbReference>
<dbReference type="InterPro" id="IPR036094">
    <property type="entry name" value="NadA_sf"/>
</dbReference>
<dbReference type="InterPro" id="IPR023515">
    <property type="entry name" value="Quinolinate_synth_A_type3"/>
</dbReference>
<dbReference type="NCBIfam" id="TIGR00550">
    <property type="entry name" value="nadA"/>
    <property type="match status" value="1"/>
</dbReference>
<dbReference type="NCBIfam" id="NF006880">
    <property type="entry name" value="PRK09375.2-1"/>
    <property type="match status" value="1"/>
</dbReference>
<dbReference type="NCBIfam" id="NF006883">
    <property type="entry name" value="PRK09375.2-4"/>
    <property type="match status" value="1"/>
</dbReference>
<dbReference type="PANTHER" id="PTHR30573:SF0">
    <property type="entry name" value="QUINOLINATE SYNTHASE, CHLOROPLASTIC"/>
    <property type="match status" value="1"/>
</dbReference>
<dbReference type="PANTHER" id="PTHR30573">
    <property type="entry name" value="QUINOLINATE SYNTHETASE A"/>
    <property type="match status" value="1"/>
</dbReference>
<dbReference type="Pfam" id="PF02445">
    <property type="entry name" value="NadA"/>
    <property type="match status" value="1"/>
</dbReference>
<dbReference type="SUPFAM" id="SSF142754">
    <property type="entry name" value="NadA-like"/>
    <property type="match status" value="1"/>
</dbReference>
<keyword id="KW-0004">4Fe-4S</keyword>
<keyword id="KW-0963">Cytoplasm</keyword>
<keyword id="KW-0408">Iron</keyword>
<keyword id="KW-0411">Iron-sulfur</keyword>
<keyword id="KW-0479">Metal-binding</keyword>
<keyword id="KW-0662">Pyridine nucleotide biosynthesis</keyword>
<keyword id="KW-1185">Reference proteome</keyword>
<keyword id="KW-0808">Transferase</keyword>
<reference key="1">
    <citation type="journal article" date="2001" name="Science">
        <title>Comparative genomics of Listeria species.</title>
        <authorList>
            <person name="Glaser P."/>
            <person name="Frangeul L."/>
            <person name="Buchrieser C."/>
            <person name="Rusniok C."/>
            <person name="Amend A."/>
            <person name="Baquero F."/>
            <person name="Berche P."/>
            <person name="Bloecker H."/>
            <person name="Brandt P."/>
            <person name="Chakraborty T."/>
            <person name="Charbit A."/>
            <person name="Chetouani F."/>
            <person name="Couve E."/>
            <person name="de Daruvar A."/>
            <person name="Dehoux P."/>
            <person name="Domann E."/>
            <person name="Dominguez-Bernal G."/>
            <person name="Duchaud E."/>
            <person name="Durant L."/>
            <person name="Dussurget O."/>
            <person name="Entian K.-D."/>
            <person name="Fsihi H."/>
            <person name="Garcia-del Portillo F."/>
            <person name="Garrido P."/>
            <person name="Gautier L."/>
            <person name="Goebel W."/>
            <person name="Gomez-Lopez N."/>
            <person name="Hain T."/>
            <person name="Hauf J."/>
            <person name="Jackson D."/>
            <person name="Jones L.-M."/>
            <person name="Kaerst U."/>
            <person name="Kreft J."/>
            <person name="Kuhn M."/>
            <person name="Kunst F."/>
            <person name="Kurapkat G."/>
            <person name="Madueno E."/>
            <person name="Maitournam A."/>
            <person name="Mata Vicente J."/>
            <person name="Ng E."/>
            <person name="Nedjari H."/>
            <person name="Nordsiek G."/>
            <person name="Novella S."/>
            <person name="de Pablos B."/>
            <person name="Perez-Diaz J.-C."/>
            <person name="Purcell R."/>
            <person name="Remmel B."/>
            <person name="Rose M."/>
            <person name="Schlueter T."/>
            <person name="Simoes N."/>
            <person name="Tierrez A."/>
            <person name="Vazquez-Boland J.-A."/>
            <person name="Voss H."/>
            <person name="Wehland J."/>
            <person name="Cossart P."/>
        </authorList>
    </citation>
    <scope>NUCLEOTIDE SEQUENCE [LARGE SCALE GENOMIC DNA]</scope>
    <source>
        <strain>ATCC BAA-679 / EGD-e</strain>
    </source>
</reference>
<accession>Q8Y5N2</accession>
<organism>
    <name type="scientific">Listeria monocytogenes serovar 1/2a (strain ATCC BAA-679 / EGD-e)</name>
    <dbReference type="NCBI Taxonomy" id="169963"/>
    <lineage>
        <taxon>Bacteria</taxon>
        <taxon>Bacillati</taxon>
        <taxon>Bacillota</taxon>
        <taxon>Bacilli</taxon>
        <taxon>Bacillales</taxon>
        <taxon>Listeriaceae</taxon>
        <taxon>Listeria</taxon>
    </lineage>
</organism>
<evidence type="ECO:0000255" key="1">
    <source>
        <dbReference type="HAMAP-Rule" id="MF_00569"/>
    </source>
</evidence>
<proteinExistence type="inferred from homology"/>
<comment type="function">
    <text evidence="1">Catalyzes the condensation of iminoaspartate with dihydroxyacetone phosphate to form quinolinate.</text>
</comment>
<comment type="catalytic activity">
    <reaction evidence="1">
        <text>iminosuccinate + dihydroxyacetone phosphate = quinolinate + phosphate + 2 H2O + H(+)</text>
        <dbReference type="Rhea" id="RHEA:25888"/>
        <dbReference type="ChEBI" id="CHEBI:15377"/>
        <dbReference type="ChEBI" id="CHEBI:15378"/>
        <dbReference type="ChEBI" id="CHEBI:29959"/>
        <dbReference type="ChEBI" id="CHEBI:43474"/>
        <dbReference type="ChEBI" id="CHEBI:57642"/>
        <dbReference type="ChEBI" id="CHEBI:77875"/>
        <dbReference type="EC" id="2.5.1.72"/>
    </reaction>
    <physiologicalReaction direction="left-to-right" evidence="1">
        <dbReference type="Rhea" id="RHEA:25889"/>
    </physiologicalReaction>
</comment>
<comment type="cofactor">
    <cofactor evidence="1">
        <name>[4Fe-4S] cluster</name>
        <dbReference type="ChEBI" id="CHEBI:49883"/>
    </cofactor>
    <text evidence="1">Binds 1 [4Fe-4S] cluster per subunit.</text>
</comment>
<comment type="pathway">
    <text evidence="1">Cofactor biosynthesis; NAD(+) biosynthesis; quinolinate from iminoaspartate: step 1/1.</text>
</comment>
<comment type="subcellular location">
    <subcellularLocation>
        <location evidence="1">Cytoplasm</location>
    </subcellularLocation>
</comment>
<comment type="similarity">
    <text evidence="1">Belongs to the quinolinate synthase family. Type 3 subfamily.</text>
</comment>
<gene>
    <name evidence="1" type="primary">nadA</name>
    <name type="ordered locus">lmo2025</name>
</gene>